<gene>
    <name evidence="1" type="primary">rpl30e</name>
    <name type="ordered locus">Msp_1371</name>
</gene>
<comment type="similarity">
    <text evidence="1">Belongs to the eukaryotic ribosomal protein eL30 family.</text>
</comment>
<name>RL30E_METST</name>
<reference key="1">
    <citation type="journal article" date="2006" name="J. Bacteriol.">
        <title>The genome sequence of Methanosphaera stadtmanae reveals why this human intestinal archaeon is restricted to methanol and H2 for methane formation and ATP synthesis.</title>
        <authorList>
            <person name="Fricke W.F."/>
            <person name="Seedorf H."/>
            <person name="Henne A."/>
            <person name="Kruer M."/>
            <person name="Liesegang H."/>
            <person name="Hedderich R."/>
            <person name="Gottschalk G."/>
            <person name="Thauer R.K."/>
        </authorList>
    </citation>
    <scope>NUCLEOTIDE SEQUENCE [LARGE SCALE GENOMIC DNA]</scope>
    <source>
        <strain>ATCC 43021 / DSM 3091 / JCM 11832 / MCB-3</strain>
    </source>
</reference>
<feature type="chain" id="PRO_1000014325" description="Large ribosomal subunit protein eL30">
    <location>
        <begin position="1"/>
        <end position="98"/>
    </location>
</feature>
<evidence type="ECO:0000255" key="1">
    <source>
        <dbReference type="HAMAP-Rule" id="MF_00481"/>
    </source>
</evidence>
<evidence type="ECO:0000305" key="2"/>
<accession>Q2NEK6</accession>
<dbReference type="EMBL" id="CP000102">
    <property type="protein sequence ID" value="ABC57747.1"/>
    <property type="molecule type" value="Genomic_DNA"/>
</dbReference>
<dbReference type="RefSeq" id="WP_011406946.1">
    <property type="nucleotide sequence ID" value="NC_007681.1"/>
</dbReference>
<dbReference type="SMR" id="Q2NEK6"/>
<dbReference type="STRING" id="339860.Msp_1371"/>
<dbReference type="KEGG" id="mst:Msp_1371"/>
<dbReference type="eggNOG" id="arCOG01752">
    <property type="taxonomic scope" value="Archaea"/>
</dbReference>
<dbReference type="HOGENOM" id="CLU_130502_1_0_2"/>
<dbReference type="OrthoDB" id="10759at2157"/>
<dbReference type="Proteomes" id="UP000001931">
    <property type="component" value="Chromosome"/>
</dbReference>
<dbReference type="GO" id="GO:0022625">
    <property type="term" value="C:cytosolic large ribosomal subunit"/>
    <property type="evidence" value="ECO:0007669"/>
    <property type="project" value="InterPro"/>
</dbReference>
<dbReference type="GO" id="GO:0003723">
    <property type="term" value="F:RNA binding"/>
    <property type="evidence" value="ECO:0007669"/>
    <property type="project" value="InterPro"/>
</dbReference>
<dbReference type="GO" id="GO:0003735">
    <property type="term" value="F:structural constituent of ribosome"/>
    <property type="evidence" value="ECO:0007669"/>
    <property type="project" value="InterPro"/>
</dbReference>
<dbReference type="GO" id="GO:0006412">
    <property type="term" value="P:translation"/>
    <property type="evidence" value="ECO:0007669"/>
    <property type="project" value="UniProtKB-UniRule"/>
</dbReference>
<dbReference type="Gene3D" id="3.30.1330.30">
    <property type="match status" value="1"/>
</dbReference>
<dbReference type="HAMAP" id="MF_00481">
    <property type="entry name" value="Ribosomal_eL30"/>
    <property type="match status" value="1"/>
</dbReference>
<dbReference type="InterPro" id="IPR000231">
    <property type="entry name" value="Ribosomal_eL30"/>
</dbReference>
<dbReference type="InterPro" id="IPR039109">
    <property type="entry name" value="Ribosomal_eL30-like"/>
</dbReference>
<dbReference type="InterPro" id="IPR029064">
    <property type="entry name" value="Ribosomal_eL30-like_sf"/>
</dbReference>
<dbReference type="InterPro" id="IPR022991">
    <property type="entry name" value="Ribosomal_eL30_CS"/>
</dbReference>
<dbReference type="InterPro" id="IPR004038">
    <property type="entry name" value="Ribosomal_eL8/eL30/eS12/Gad45"/>
</dbReference>
<dbReference type="NCBIfam" id="NF002172">
    <property type="entry name" value="PRK01018.1"/>
    <property type="match status" value="1"/>
</dbReference>
<dbReference type="PANTHER" id="PTHR11449">
    <property type="entry name" value="RIBOSOMAL PROTEIN L30"/>
    <property type="match status" value="1"/>
</dbReference>
<dbReference type="Pfam" id="PF01248">
    <property type="entry name" value="Ribosomal_L7Ae"/>
    <property type="match status" value="1"/>
</dbReference>
<dbReference type="SUPFAM" id="SSF55315">
    <property type="entry name" value="L30e-like"/>
    <property type="match status" value="1"/>
</dbReference>
<dbReference type="PROSITE" id="PS00993">
    <property type="entry name" value="RIBOSOMAL_L30E_2"/>
    <property type="match status" value="1"/>
</dbReference>
<organism>
    <name type="scientific">Methanosphaera stadtmanae (strain ATCC 43021 / DSM 3091 / JCM 11832 / MCB-3)</name>
    <dbReference type="NCBI Taxonomy" id="339860"/>
    <lineage>
        <taxon>Archaea</taxon>
        <taxon>Methanobacteriati</taxon>
        <taxon>Methanobacteriota</taxon>
        <taxon>Methanomada group</taxon>
        <taxon>Methanobacteria</taxon>
        <taxon>Methanobacteriales</taxon>
        <taxon>Methanobacteriaceae</taxon>
        <taxon>Methanosphaera</taxon>
    </lineage>
</organism>
<keyword id="KW-1185">Reference proteome</keyword>
<keyword id="KW-0687">Ribonucleoprotein</keyword>
<keyword id="KW-0689">Ribosomal protein</keyword>
<proteinExistence type="inferred from homology"/>
<sequence length="98" mass="10495">MDIERGIRVAVDTGKVILGSNKAIQAIKLGNGELAIMAENTPKNVKADIEAYSKLSEMPVYTFEGSSVELGSICGKPFTVSVLIIQEPGDSNILEIKE</sequence>
<protein>
    <recommendedName>
        <fullName evidence="1">Large ribosomal subunit protein eL30</fullName>
    </recommendedName>
    <alternativeName>
        <fullName evidence="2">50S ribosomal protein L30e</fullName>
    </alternativeName>
</protein>